<dbReference type="EC" id="2.3.1.35" evidence="2"/>
<dbReference type="EC" id="2.3.1.1" evidence="2"/>
<dbReference type="EMBL" id="AL123456">
    <property type="protein sequence ID" value="CCP44418.1"/>
    <property type="molecule type" value="Genomic_DNA"/>
</dbReference>
<dbReference type="PIR" id="H70620">
    <property type="entry name" value="H70620"/>
</dbReference>
<dbReference type="RefSeq" id="NP_216169.1">
    <property type="nucleotide sequence ID" value="NC_000962.3"/>
</dbReference>
<dbReference type="RefSeq" id="WP_003408160.1">
    <property type="nucleotide sequence ID" value="NZ_NVQJ01000069.1"/>
</dbReference>
<dbReference type="PDB" id="3IT4">
    <property type="method" value="X-ray"/>
    <property type="resolution" value="1.70 A"/>
    <property type="chains" value="A/C=2-199, B/D=200-404"/>
</dbReference>
<dbReference type="PDB" id="3IT6">
    <property type="method" value="X-ray"/>
    <property type="resolution" value="2.40 A"/>
    <property type="chains" value="A/C=2-199, B/D=200-404"/>
</dbReference>
<dbReference type="PDBsum" id="3IT4"/>
<dbReference type="PDBsum" id="3IT6"/>
<dbReference type="SMR" id="P9WPZ3"/>
<dbReference type="FunCoup" id="P9WPZ3">
    <property type="interactions" value="387"/>
</dbReference>
<dbReference type="STRING" id="83332.Rv1653"/>
<dbReference type="PaxDb" id="83332-Rv1653"/>
<dbReference type="DNASU" id="885125"/>
<dbReference type="GeneID" id="885125"/>
<dbReference type="KEGG" id="mtu:Rv1653"/>
<dbReference type="KEGG" id="mtv:RVBD_1653"/>
<dbReference type="TubercuList" id="Rv1653"/>
<dbReference type="eggNOG" id="COG1364">
    <property type="taxonomic scope" value="Bacteria"/>
</dbReference>
<dbReference type="InParanoid" id="P9WPZ3"/>
<dbReference type="OrthoDB" id="9804242at2"/>
<dbReference type="PhylomeDB" id="P9WPZ3"/>
<dbReference type="BRENDA" id="2.3.1.35">
    <property type="organism ID" value="3445"/>
</dbReference>
<dbReference type="UniPathway" id="UPA00068">
    <property type="reaction ID" value="UER00106"/>
</dbReference>
<dbReference type="UniPathway" id="UPA00068">
    <property type="reaction ID" value="UER00111"/>
</dbReference>
<dbReference type="EvolutionaryTrace" id="P9WPZ3"/>
<dbReference type="Proteomes" id="UP000001584">
    <property type="component" value="Chromosome"/>
</dbReference>
<dbReference type="GO" id="GO:0005737">
    <property type="term" value="C:cytoplasm"/>
    <property type="evidence" value="ECO:0007669"/>
    <property type="project" value="UniProtKB-SubCell"/>
</dbReference>
<dbReference type="GO" id="GO:0004358">
    <property type="term" value="F:glutamate N-acetyltransferase activity"/>
    <property type="evidence" value="ECO:0007669"/>
    <property type="project" value="UniProtKB-UniRule"/>
</dbReference>
<dbReference type="GO" id="GO:0004042">
    <property type="term" value="F:L-glutamate N-acetyltransferase activity"/>
    <property type="evidence" value="ECO:0000318"/>
    <property type="project" value="GO_Central"/>
</dbReference>
<dbReference type="GO" id="GO:0006526">
    <property type="term" value="P:L-arginine biosynthetic process"/>
    <property type="evidence" value="ECO:0007669"/>
    <property type="project" value="UniProtKB-UniRule"/>
</dbReference>
<dbReference type="GO" id="GO:0006592">
    <property type="term" value="P:ornithine biosynthetic process"/>
    <property type="evidence" value="ECO:0000318"/>
    <property type="project" value="GO_Central"/>
</dbReference>
<dbReference type="CDD" id="cd02152">
    <property type="entry name" value="OAT"/>
    <property type="match status" value="1"/>
</dbReference>
<dbReference type="FunFam" id="3.10.20.340:FF:000005">
    <property type="entry name" value="Arginine biosynthesis bifunctional protein ArgJ"/>
    <property type="match status" value="1"/>
</dbReference>
<dbReference type="FunFam" id="3.30.2330.10:FF:000002">
    <property type="entry name" value="Arginine biosynthesis bifunctional protein ArgJ"/>
    <property type="match status" value="1"/>
</dbReference>
<dbReference type="FunFam" id="3.60.70.12:FF:000005">
    <property type="entry name" value="Arginine biosynthesis bifunctional protein ArgJ"/>
    <property type="match status" value="1"/>
</dbReference>
<dbReference type="Gene3D" id="3.30.2330.10">
    <property type="entry name" value="arginine biosynthesis bifunctional protein suprefamily"/>
    <property type="match status" value="1"/>
</dbReference>
<dbReference type="Gene3D" id="3.10.20.340">
    <property type="entry name" value="ArgJ beta chain, C-terminal domain"/>
    <property type="match status" value="1"/>
</dbReference>
<dbReference type="Gene3D" id="3.60.70.12">
    <property type="entry name" value="L-amino peptidase D-ALA esterase/amidase"/>
    <property type="match status" value="1"/>
</dbReference>
<dbReference type="HAMAP" id="MF_01106">
    <property type="entry name" value="ArgJ"/>
    <property type="match status" value="1"/>
</dbReference>
<dbReference type="InterPro" id="IPR002813">
    <property type="entry name" value="Arg_biosynth_ArgJ"/>
</dbReference>
<dbReference type="InterPro" id="IPR016117">
    <property type="entry name" value="ArgJ-like_dom_sf"/>
</dbReference>
<dbReference type="InterPro" id="IPR042195">
    <property type="entry name" value="ArgJ_beta_C"/>
</dbReference>
<dbReference type="NCBIfam" id="TIGR00120">
    <property type="entry name" value="ArgJ"/>
    <property type="match status" value="1"/>
</dbReference>
<dbReference type="NCBIfam" id="NF003802">
    <property type="entry name" value="PRK05388.1"/>
    <property type="match status" value="1"/>
</dbReference>
<dbReference type="PANTHER" id="PTHR23100">
    <property type="entry name" value="ARGININE BIOSYNTHESIS BIFUNCTIONAL PROTEIN ARGJ"/>
    <property type="match status" value="1"/>
</dbReference>
<dbReference type="PANTHER" id="PTHR23100:SF0">
    <property type="entry name" value="ARGININE BIOSYNTHESIS BIFUNCTIONAL PROTEIN ARGJ, MITOCHONDRIAL"/>
    <property type="match status" value="1"/>
</dbReference>
<dbReference type="Pfam" id="PF01960">
    <property type="entry name" value="ArgJ"/>
    <property type="match status" value="1"/>
</dbReference>
<dbReference type="SUPFAM" id="SSF56266">
    <property type="entry name" value="DmpA/ArgJ-like"/>
    <property type="match status" value="1"/>
</dbReference>
<keyword id="KW-0002">3D-structure</keyword>
<keyword id="KW-0012">Acyltransferase</keyword>
<keyword id="KW-0028">Amino-acid biosynthesis</keyword>
<keyword id="KW-0055">Arginine biosynthesis</keyword>
<keyword id="KW-0068">Autocatalytic cleavage</keyword>
<keyword id="KW-0963">Cytoplasm</keyword>
<keyword id="KW-0511">Multifunctional enzyme</keyword>
<keyword id="KW-1185">Reference proteome</keyword>
<keyword id="KW-0808">Transferase</keyword>
<gene>
    <name evidence="2" type="primary">argJ</name>
    <name type="ordered locus">Rv1653</name>
    <name type="ORF">MTCY06H11.18</name>
</gene>
<reference key="1">
    <citation type="journal article" date="1998" name="Nature">
        <title>Deciphering the biology of Mycobacterium tuberculosis from the complete genome sequence.</title>
        <authorList>
            <person name="Cole S.T."/>
            <person name="Brosch R."/>
            <person name="Parkhill J."/>
            <person name="Garnier T."/>
            <person name="Churcher C.M."/>
            <person name="Harris D.E."/>
            <person name="Gordon S.V."/>
            <person name="Eiglmeier K."/>
            <person name="Gas S."/>
            <person name="Barry C.E. III"/>
            <person name="Tekaia F."/>
            <person name="Badcock K."/>
            <person name="Basham D."/>
            <person name="Brown D."/>
            <person name="Chillingworth T."/>
            <person name="Connor R."/>
            <person name="Davies R.M."/>
            <person name="Devlin K."/>
            <person name="Feltwell T."/>
            <person name="Gentles S."/>
            <person name="Hamlin N."/>
            <person name="Holroyd S."/>
            <person name="Hornsby T."/>
            <person name="Jagels K."/>
            <person name="Krogh A."/>
            <person name="McLean J."/>
            <person name="Moule S."/>
            <person name="Murphy L.D."/>
            <person name="Oliver S."/>
            <person name="Osborne J."/>
            <person name="Quail M.A."/>
            <person name="Rajandream M.A."/>
            <person name="Rogers J."/>
            <person name="Rutter S."/>
            <person name="Seeger K."/>
            <person name="Skelton S."/>
            <person name="Squares S."/>
            <person name="Squares R."/>
            <person name="Sulston J.E."/>
            <person name="Taylor K."/>
            <person name="Whitehead S."/>
            <person name="Barrell B.G."/>
        </authorList>
    </citation>
    <scope>NUCLEOTIDE SEQUENCE [LARGE SCALE GENOMIC DNA]</scope>
    <source>
        <strain>ATCC 25618 / H37Rv</strain>
    </source>
</reference>
<reference key="2">
    <citation type="journal article" date="2008" name="BMC Syst. Biol.">
        <title>targetTB: a target identification pipeline for Mycobacterium tuberculosis through an interactome, reactome and genome-scale structural analysis.</title>
        <authorList>
            <person name="Raman K."/>
            <person name="Yeturu K."/>
            <person name="Chandra N."/>
        </authorList>
    </citation>
    <scope>IDENTIFICATION AS A DRUG TARGET [LARGE SCALE ANALYSIS]</scope>
</reference>
<reference key="3">
    <citation type="journal article" date="2011" name="Mol. Cell. Proteomics">
        <title>Proteogenomic analysis of Mycobacterium tuberculosis by high resolution mass spectrometry.</title>
        <authorList>
            <person name="Kelkar D.S."/>
            <person name="Kumar D."/>
            <person name="Kumar P."/>
            <person name="Balakrishnan L."/>
            <person name="Muthusamy B."/>
            <person name="Yadav A.K."/>
            <person name="Shrivastava P."/>
            <person name="Marimuthu A."/>
            <person name="Anand S."/>
            <person name="Sundaram H."/>
            <person name="Kingsbury R."/>
            <person name="Harsha H.C."/>
            <person name="Nair B."/>
            <person name="Prasad T.S."/>
            <person name="Chauhan D.S."/>
            <person name="Katoch K."/>
            <person name="Katoch V.M."/>
            <person name="Kumar P."/>
            <person name="Chaerkady R."/>
            <person name="Ramachandran S."/>
            <person name="Dash D."/>
            <person name="Pandey A."/>
        </authorList>
    </citation>
    <scope>IDENTIFICATION BY MASS SPECTROMETRY [LARGE SCALE ANALYSIS]</scope>
    <source>
        <strain>ATCC 25618 / H37Rv</strain>
    </source>
</reference>
<reference key="4">
    <citation type="journal article" date="2010" name="J. Mol. Biol.">
        <title>The molecular structure of ornithine acetyltransferase from Mycobacterium tuberculosis bound to ornithine, a competitive inhibitor.</title>
        <authorList>
            <person name="Sankaranarayanan R."/>
            <person name="Cherney M.M."/>
            <person name="Garen C."/>
            <person name="Garen G."/>
            <person name="Niu C."/>
            <person name="Yuan M."/>
            <person name="James M.N."/>
        </authorList>
    </citation>
    <scope>X-RAY CRYSTALLOGRAPHY (1.7 ANGSTROMS) OF 2-404 IN COMPLEX WITH SUBSTRATE ANALOGS</scope>
    <scope>SUBUNIT</scope>
</reference>
<sequence>MTDLAGTTRLLRAQGVTAPAGFRAAGVAAGIKASGALDLALVFNEGPDYAAAGVFTRNQVKAAPVLWTQQVLTTGRLRAVILNSGGANACTGPAGFADTHATAEAVAAALSDWGTETGAIEVAVCSTGLIGDRLPMDKLLAGVAHVVHEMHGGLVGGDEAAHAIMTTDNVPKQVALHHHDNWTVGGMAKGAGMLAPSLATMLCVLTTDAAAEPAALERALRRAAAATFDRLDIDGSCSTNDTVLLLSSGASEIPPAQADLDEAVLRVCDDLCAQLQADAEGVTKRVTVTVTGAATEDDALVAARQIARDSLVKTALFGSDPNWGRVLAAVGMAPITLDPDRISVSFNGAAVCVHGVGAPGAREVDLSDADIDITVDLGVGDGQARIRTTDLSHAYVEENSAYSS</sequence>
<feature type="chain" id="PRO_0000002193" description="Arginine biosynthesis bifunctional protein ArgJ alpha chain" evidence="1">
    <location>
        <begin position="1"/>
        <end position="199"/>
    </location>
</feature>
<feature type="chain" id="PRO_0000002194" description="Arginine biosynthesis bifunctional protein ArgJ beta chain" evidence="1">
    <location>
        <begin position="200"/>
        <end position="404"/>
    </location>
</feature>
<feature type="active site" description="Nucleophile">
    <location>
        <position position="200"/>
    </location>
</feature>
<feature type="binding site">
    <location>
        <position position="166"/>
    </location>
    <ligand>
        <name>substrate</name>
    </ligand>
</feature>
<feature type="binding site">
    <location>
        <position position="189"/>
    </location>
    <ligand>
        <name>substrate</name>
    </ligand>
</feature>
<feature type="binding site">
    <location>
        <position position="200"/>
    </location>
    <ligand>
        <name>substrate</name>
    </ligand>
</feature>
<feature type="binding site">
    <location>
        <position position="280"/>
    </location>
    <ligand>
        <name>substrate</name>
    </ligand>
</feature>
<feature type="binding site">
    <location>
        <position position="399"/>
    </location>
    <ligand>
        <name>substrate</name>
    </ligand>
</feature>
<feature type="binding site">
    <location>
        <position position="404"/>
    </location>
    <ligand>
        <name>substrate</name>
    </ligand>
</feature>
<feature type="site" description="Involved in the stabilization of negative charge on the oxyanion by the formation of the oxyanion hole">
    <location>
        <position position="127"/>
    </location>
</feature>
<feature type="site" description="Involved in the stabilization of negative charge on the oxyanion by the formation of the oxyanion hole">
    <location>
        <position position="128"/>
    </location>
</feature>
<feature type="site" description="Cleavage; by autolysis">
    <location>
        <begin position="199"/>
        <end position="200"/>
    </location>
</feature>
<feature type="strand" evidence="5">
    <location>
        <begin position="9"/>
        <end position="13"/>
    </location>
</feature>
<feature type="strand" evidence="5">
    <location>
        <begin position="22"/>
        <end position="27"/>
    </location>
</feature>
<feature type="strand" evidence="6">
    <location>
        <begin position="30"/>
        <end position="32"/>
    </location>
</feature>
<feature type="strand" evidence="5">
    <location>
        <begin position="39"/>
        <end position="44"/>
    </location>
</feature>
<feature type="strand" evidence="5">
    <location>
        <begin position="50"/>
        <end position="56"/>
    </location>
</feature>
<feature type="helix" evidence="5">
    <location>
        <begin position="63"/>
        <end position="72"/>
    </location>
</feature>
<feature type="strand" evidence="5">
    <location>
        <begin position="78"/>
        <end position="83"/>
    </location>
</feature>
<feature type="helix" evidence="5">
    <location>
        <begin position="92"/>
        <end position="113"/>
    </location>
</feature>
<feature type="helix" evidence="5">
    <location>
        <begin position="119"/>
        <end position="121"/>
    </location>
</feature>
<feature type="strand" evidence="5">
    <location>
        <begin position="122"/>
        <end position="128"/>
    </location>
</feature>
<feature type="helix" evidence="5">
    <location>
        <begin position="136"/>
        <end position="149"/>
    </location>
</feature>
<feature type="strand" evidence="5">
    <location>
        <begin position="151"/>
        <end position="153"/>
    </location>
</feature>
<feature type="helix" evidence="5">
    <location>
        <begin position="154"/>
        <end position="163"/>
    </location>
</feature>
<feature type="strand" evidence="5">
    <location>
        <begin position="172"/>
        <end position="177"/>
    </location>
</feature>
<feature type="strand" evidence="5">
    <location>
        <begin position="183"/>
        <end position="189"/>
    </location>
</feature>
<feature type="strand" evidence="5">
    <location>
        <begin position="191"/>
        <end position="193"/>
    </location>
</feature>
<feature type="strand" evidence="5">
    <location>
        <begin position="202"/>
        <end position="207"/>
    </location>
</feature>
<feature type="helix" evidence="5">
    <location>
        <begin position="213"/>
        <end position="226"/>
    </location>
</feature>
<feature type="helix" evidence="5">
    <location>
        <begin position="228"/>
        <end position="230"/>
    </location>
</feature>
<feature type="strand" evidence="5">
    <location>
        <begin position="233"/>
        <end position="235"/>
    </location>
</feature>
<feature type="strand" evidence="5">
    <location>
        <begin position="242"/>
        <end position="247"/>
    </location>
</feature>
<feature type="helix" evidence="5">
    <location>
        <begin position="257"/>
        <end position="277"/>
    </location>
</feature>
<feature type="strand" evidence="5">
    <location>
        <begin position="285"/>
        <end position="295"/>
    </location>
</feature>
<feature type="helix" evidence="5">
    <location>
        <begin position="296"/>
        <end position="308"/>
    </location>
</feature>
<feature type="helix" evidence="5">
    <location>
        <begin position="310"/>
        <end position="317"/>
    </location>
</feature>
<feature type="helix" evidence="5">
    <location>
        <begin position="323"/>
        <end position="330"/>
    </location>
</feature>
<feature type="strand" evidence="5">
    <location>
        <begin position="333"/>
        <end position="335"/>
    </location>
</feature>
<feature type="helix" evidence="5">
    <location>
        <begin position="339"/>
        <end position="341"/>
    </location>
</feature>
<feature type="strand" evidence="5">
    <location>
        <begin position="343"/>
        <end position="346"/>
    </location>
</feature>
<feature type="strand" evidence="5">
    <location>
        <begin position="349"/>
        <end position="353"/>
    </location>
</feature>
<feature type="helix" evidence="5">
    <location>
        <begin position="361"/>
        <end position="363"/>
    </location>
</feature>
<feature type="strand" evidence="5">
    <location>
        <begin position="368"/>
        <end position="376"/>
    </location>
</feature>
<feature type="strand" evidence="5">
    <location>
        <begin position="382"/>
        <end position="389"/>
    </location>
</feature>
<feature type="helix" evidence="5">
    <location>
        <begin position="393"/>
        <end position="400"/>
    </location>
</feature>
<organism>
    <name type="scientific">Mycobacterium tuberculosis (strain ATCC 25618 / H37Rv)</name>
    <dbReference type="NCBI Taxonomy" id="83332"/>
    <lineage>
        <taxon>Bacteria</taxon>
        <taxon>Bacillati</taxon>
        <taxon>Actinomycetota</taxon>
        <taxon>Actinomycetes</taxon>
        <taxon>Mycobacteriales</taxon>
        <taxon>Mycobacteriaceae</taxon>
        <taxon>Mycobacterium</taxon>
        <taxon>Mycobacterium tuberculosis complex</taxon>
    </lineage>
</organism>
<protein>
    <recommendedName>
        <fullName evidence="2">Arginine biosynthesis bifunctional protein ArgJ</fullName>
    </recommendedName>
    <domain>
        <recommendedName>
            <fullName evidence="2">Glutamate N-acetyltransferase</fullName>
            <ecNumber evidence="2">2.3.1.35</ecNumber>
        </recommendedName>
        <alternativeName>
            <fullName evidence="2">Ornithine acetyltransferase</fullName>
            <shortName evidence="2">OATase</shortName>
        </alternativeName>
        <alternativeName>
            <fullName evidence="2">Ornithine transacetylase</fullName>
        </alternativeName>
    </domain>
    <domain>
        <recommendedName>
            <fullName evidence="2">Amino-acid acetyltransferase</fullName>
            <ecNumber evidence="2">2.3.1.1</ecNumber>
        </recommendedName>
        <alternativeName>
            <fullName evidence="2">N-acetylglutamate synthase</fullName>
            <shortName evidence="2">AGSase</shortName>
        </alternativeName>
    </domain>
    <component>
        <recommendedName>
            <fullName evidence="2">Arginine biosynthesis bifunctional protein ArgJ alpha chain</fullName>
        </recommendedName>
    </component>
    <component>
        <recommendedName>
            <fullName evidence="2">Arginine biosynthesis bifunctional protein ArgJ beta chain</fullName>
        </recommendedName>
    </component>
</protein>
<name>ARGJ_MYCTU</name>
<comment type="function">
    <text evidence="2">Catalyzes two activities which are involved in the cyclic version of arginine biosynthesis: the synthesis of N-acetylglutamate from glutamate and acetyl-CoA as the acetyl donor, and of ornithine by transacetylation between N(2)-acetylornithine and glutamate.</text>
</comment>
<comment type="catalytic activity">
    <reaction evidence="2">
        <text>N(2)-acetyl-L-ornithine + L-glutamate = N-acetyl-L-glutamate + L-ornithine</text>
        <dbReference type="Rhea" id="RHEA:15349"/>
        <dbReference type="ChEBI" id="CHEBI:29985"/>
        <dbReference type="ChEBI" id="CHEBI:44337"/>
        <dbReference type="ChEBI" id="CHEBI:46911"/>
        <dbReference type="ChEBI" id="CHEBI:57805"/>
        <dbReference type="EC" id="2.3.1.35"/>
    </reaction>
</comment>
<comment type="catalytic activity">
    <reaction evidence="2">
        <text>L-glutamate + acetyl-CoA = N-acetyl-L-glutamate + CoA + H(+)</text>
        <dbReference type="Rhea" id="RHEA:24292"/>
        <dbReference type="ChEBI" id="CHEBI:15378"/>
        <dbReference type="ChEBI" id="CHEBI:29985"/>
        <dbReference type="ChEBI" id="CHEBI:44337"/>
        <dbReference type="ChEBI" id="CHEBI:57287"/>
        <dbReference type="ChEBI" id="CHEBI:57288"/>
        <dbReference type="EC" id="2.3.1.1"/>
    </reaction>
</comment>
<comment type="pathway">
    <text evidence="2">Amino-acid biosynthesis; L-arginine biosynthesis; L-ornithine and N-acetyl-L-glutamate from L-glutamate and N(2)-acetyl-L-ornithine (cyclic): step 1/1.</text>
</comment>
<comment type="pathway">
    <text evidence="2">Amino-acid biosynthesis; L-arginine biosynthesis; N(2)-acetyl-L-ornithine from L-glutamate: step 1/4.</text>
</comment>
<comment type="subunit">
    <text evidence="2 3">Heterotetramer of two alpha and two beta chains.</text>
</comment>
<comment type="subcellular location">
    <subcellularLocation>
        <location evidence="2 4">Cytoplasm</location>
    </subcellularLocation>
</comment>
<comment type="miscellaneous">
    <text>Was identified as a high-confidence drug target.</text>
</comment>
<comment type="similarity">
    <text evidence="2 4">Belongs to the ArgJ family.</text>
</comment>
<proteinExistence type="evidence at protein level"/>
<accession>P9WPZ3</accession>
<accession>L0TA91</accession>
<accession>P63571</accession>
<accession>P94988</accession>
<evidence type="ECO:0000250" key="1"/>
<evidence type="ECO:0000255" key="2">
    <source>
        <dbReference type="HAMAP-Rule" id="MF_01106"/>
    </source>
</evidence>
<evidence type="ECO:0000269" key="3">
    <source>
    </source>
</evidence>
<evidence type="ECO:0000305" key="4"/>
<evidence type="ECO:0007829" key="5">
    <source>
        <dbReference type="PDB" id="3IT4"/>
    </source>
</evidence>
<evidence type="ECO:0007829" key="6">
    <source>
        <dbReference type="PDB" id="3IT6"/>
    </source>
</evidence>